<reference key="1">
    <citation type="journal article" date="1999" name="FEBS Lett.">
        <title>A thermostable vacuolar-type membrane pyrophosphatase from the archaeon Pyrobaculum aerophilum: implications for the origins of pyrophosphate-energized pumps.</title>
        <authorList>
            <person name="Drozdowicz Y.M."/>
            <person name="Lu Y.-P."/>
            <person name="Patel V."/>
            <person name="Fitz-Gibbon S."/>
            <person name="Miller J.H."/>
            <person name="Rea P.A."/>
        </authorList>
    </citation>
    <scope>NUCLEOTIDE SEQUENCE [GENOMIC DNA]</scope>
    <scope>CATALYTIC ACTIVITY</scope>
    <scope>COFACTOR</scope>
    <scope>BIOPHYSICOCHEMICAL PROPERTIES</scope>
    <source>
        <strain>ATCC 51768 / DSM 7523 / JCM 9630 / CIP 104966 / NBRC 100827 / IM2</strain>
    </source>
</reference>
<reference key="2">
    <citation type="journal article" date="2002" name="Proc. Natl. Acad. Sci. U.S.A.">
        <title>Genome sequence of the hyperthermophilic crenarchaeon Pyrobaculum aerophilum.</title>
        <authorList>
            <person name="Fitz-Gibbon S.T."/>
            <person name="Ladner H."/>
            <person name="Kim U.-J."/>
            <person name="Stetter K.O."/>
            <person name="Simon M.I."/>
            <person name="Miller J.H."/>
        </authorList>
    </citation>
    <scope>NUCLEOTIDE SEQUENCE [LARGE SCALE GENOMIC DNA]</scope>
    <source>
        <strain>ATCC 51768 / DSM 7523 / JCM 9630 / CIP 104966 / NBRC 100827 / IM2</strain>
    </source>
</reference>
<accession>Q8ZWI8</accession>
<accession>Q9V2S8</accession>
<gene>
    <name evidence="2" type="primary">hppA</name>
    <name type="ordered locus">PAE1771</name>
</gene>
<feature type="chain" id="PRO_0000217038" description="K(+)-insensitive pyrophosphate-energized proton pump">
    <location>
        <begin position="1"/>
        <end position="721"/>
    </location>
</feature>
<feature type="transmembrane region" description="Helical" evidence="2">
    <location>
        <begin position="8"/>
        <end position="28"/>
    </location>
</feature>
<feature type="transmembrane region" description="Helical" evidence="2">
    <location>
        <begin position="57"/>
        <end position="77"/>
    </location>
</feature>
<feature type="transmembrane region" description="Helical" evidence="2">
    <location>
        <begin position="82"/>
        <end position="102"/>
    </location>
</feature>
<feature type="transmembrane region" description="Helical" evidence="2">
    <location>
        <begin position="136"/>
        <end position="156"/>
    </location>
</feature>
<feature type="transmembrane region" description="Helical" evidence="2">
    <location>
        <begin position="168"/>
        <end position="188"/>
    </location>
</feature>
<feature type="transmembrane region" description="Helical" evidence="2">
    <location>
        <begin position="247"/>
        <end position="267"/>
    </location>
</feature>
<feature type="transmembrane region" description="Helical" evidence="2">
    <location>
        <begin position="294"/>
        <end position="314"/>
    </location>
</feature>
<feature type="transmembrane region" description="Helical" evidence="2">
    <location>
        <begin position="323"/>
        <end position="343"/>
    </location>
</feature>
<feature type="transmembrane region" description="Helical" evidence="2">
    <location>
        <begin position="374"/>
        <end position="394"/>
    </location>
</feature>
<feature type="transmembrane region" description="Helical" evidence="2">
    <location>
        <begin position="416"/>
        <end position="436"/>
    </location>
</feature>
<feature type="transmembrane region" description="Helical" evidence="2">
    <location>
        <begin position="483"/>
        <end position="503"/>
    </location>
</feature>
<feature type="transmembrane region" description="Helical" evidence="2">
    <location>
        <begin position="527"/>
        <end position="547"/>
    </location>
</feature>
<feature type="transmembrane region" description="Helical" evidence="2">
    <location>
        <begin position="599"/>
        <end position="619"/>
    </location>
</feature>
<feature type="transmembrane region" description="Helical" evidence="2">
    <location>
        <begin position="621"/>
        <end position="641"/>
    </location>
</feature>
<feature type="transmembrane region" description="Helical" evidence="2">
    <location>
        <begin position="698"/>
        <end position="718"/>
    </location>
</feature>
<feature type="binding site" evidence="1">
    <location>
        <position position="191"/>
    </location>
    <ligand>
        <name>substrate</name>
    </ligand>
</feature>
<feature type="binding site" evidence="1">
    <location>
        <position position="194"/>
    </location>
    <ligand>
        <name>Mg(2+)</name>
        <dbReference type="ChEBI" id="CHEBI:18420"/>
        <label>1</label>
    </ligand>
</feature>
<feature type="binding site" evidence="1">
    <location>
        <position position="198"/>
    </location>
    <ligand>
        <name>Mg(2+)</name>
        <dbReference type="ChEBI" id="CHEBI:18420"/>
        <label>1</label>
    </ligand>
</feature>
<feature type="binding site" evidence="1">
    <location>
        <position position="221"/>
    </location>
    <ligand>
        <name>Mg(2+)</name>
        <dbReference type="ChEBI" id="CHEBI:18420"/>
        <label>2</label>
    </ligand>
</feature>
<feature type="binding site" evidence="1">
    <location>
        <position position="224"/>
    </location>
    <ligand>
        <name>Mg(2+)</name>
        <dbReference type="ChEBI" id="CHEBI:18420"/>
        <label>2</label>
    </ligand>
</feature>
<feature type="binding site" evidence="1">
    <location>
        <position position="446"/>
    </location>
    <ligand>
        <name>Mg(2+)</name>
        <dbReference type="ChEBI" id="CHEBI:18420"/>
        <label>2</label>
    </ligand>
</feature>
<feature type="binding site" evidence="1">
    <location>
        <position position="648"/>
    </location>
    <ligand>
        <name>Ca(2+)</name>
        <dbReference type="ChEBI" id="CHEBI:29108"/>
    </ligand>
</feature>
<feature type="binding site" evidence="1">
    <location>
        <position position="672"/>
    </location>
    <ligand>
        <name>Ca(2+)</name>
        <dbReference type="ChEBI" id="CHEBI:29108"/>
    </ligand>
</feature>
<feature type="binding site" evidence="1">
    <location>
        <position position="676"/>
    </location>
    <ligand>
        <name>Ca(2+)</name>
        <dbReference type="ChEBI" id="CHEBI:29108"/>
    </ligand>
</feature>
<feature type="binding site" evidence="1">
    <location>
        <position position="679"/>
    </location>
    <ligand>
        <name>substrate</name>
    </ligand>
</feature>
<feature type="site" description="Important for ion transport" evidence="1">
    <location>
        <position position="183"/>
    </location>
</feature>
<feature type="site" description="Important for ion transport" evidence="1">
    <location>
        <position position="228"/>
    </location>
</feature>
<feature type="site" description="Important for ion transport" evidence="1">
    <location>
        <position position="235"/>
    </location>
</feature>
<feature type="site" description="Important for potassium independence" evidence="1">
    <location>
        <position position="476"/>
    </location>
</feature>
<feature type="site" description="Important for ion transport" evidence="1">
    <location>
        <position position="680"/>
    </location>
</feature>
<feature type="site" description="Important for ion transport" evidence="1">
    <location>
        <position position="691"/>
    </location>
</feature>
<feature type="sequence conflict" description="In Ref. 1; AAF01029." evidence="4" ref="1">
    <original>S</original>
    <variation>T</variation>
    <location>
        <position position="305"/>
    </location>
</feature>
<feature type="sequence conflict" description="In Ref. 1; AAF01029." evidence="4" ref="1">
    <original>A</original>
    <variation>P</variation>
    <location>
        <position position="553"/>
    </location>
</feature>
<keyword id="KW-0002">3D-structure</keyword>
<keyword id="KW-0106">Calcium</keyword>
<keyword id="KW-1003">Cell membrane</keyword>
<keyword id="KW-0375">Hydrogen ion transport</keyword>
<keyword id="KW-0406">Ion transport</keyword>
<keyword id="KW-0460">Magnesium</keyword>
<keyword id="KW-0472">Membrane</keyword>
<keyword id="KW-0479">Metal-binding</keyword>
<keyword id="KW-1185">Reference proteome</keyword>
<keyword id="KW-1278">Translocase</keyword>
<keyword id="KW-0812">Transmembrane</keyword>
<keyword id="KW-1133">Transmembrane helix</keyword>
<keyword id="KW-0813">Transport</keyword>
<comment type="function">
    <text evidence="2">Proton pump that utilizes the energy of pyrophosphate hydrolysis as the driving force for proton movement across the membrane. Generates a proton motive force.</text>
</comment>
<comment type="catalytic activity">
    <reaction evidence="2 3">
        <text>diphosphate + H2O + H(+)(in) = 2 phosphate + 2 H(+)(out)</text>
        <dbReference type="Rhea" id="RHEA:13973"/>
        <dbReference type="ChEBI" id="CHEBI:15377"/>
        <dbReference type="ChEBI" id="CHEBI:15378"/>
        <dbReference type="ChEBI" id="CHEBI:33019"/>
        <dbReference type="ChEBI" id="CHEBI:43474"/>
        <dbReference type="EC" id="7.1.3.1"/>
    </reaction>
</comment>
<comment type="cofactor">
    <cofactor evidence="2 3">
        <name>Mg(2+)</name>
        <dbReference type="ChEBI" id="CHEBI:18420"/>
    </cofactor>
</comment>
<comment type="biophysicochemical properties">
    <temperatureDependence>
        <text evidence="3">Optimum temperature is 80 degrees Celsius.</text>
    </temperatureDependence>
</comment>
<comment type="subunit">
    <text evidence="2">Homodimer.</text>
</comment>
<comment type="subcellular location">
    <subcellularLocation>
        <location evidence="2">Cell membrane</location>
        <topology evidence="2">Multi-pass membrane protein</topology>
    </subcellularLocation>
</comment>
<comment type="similarity">
    <text evidence="2">Belongs to the H(+)-translocating pyrophosphatase (TC 3.A.10) family. K(+)-insensitive subfamily.</text>
</comment>
<dbReference type="EC" id="7.1.3.1" evidence="2 3"/>
<dbReference type="EMBL" id="AF182812">
    <property type="protein sequence ID" value="AAF01029.1"/>
    <property type="molecule type" value="Genomic_DNA"/>
</dbReference>
<dbReference type="EMBL" id="AE009441">
    <property type="protein sequence ID" value="AAL63714.1"/>
    <property type="molecule type" value="Genomic_DNA"/>
</dbReference>
<dbReference type="PDB" id="8B37">
    <property type="method" value="X-ray"/>
    <property type="resolution" value="3.84 A"/>
    <property type="chains" value="A/B=2-721"/>
</dbReference>
<dbReference type="PDBsum" id="8B37"/>
<dbReference type="SMR" id="Q8ZWI8"/>
<dbReference type="STRING" id="178306.PAE1771"/>
<dbReference type="TCDB" id="3.A.10.3.1">
    <property type="family name" value="the h(+), na(+)-translocating pyrophosphatase (m(+)-ppase) family"/>
</dbReference>
<dbReference type="EnsemblBacteria" id="AAL63714">
    <property type="protein sequence ID" value="AAL63714"/>
    <property type="gene ID" value="PAE1771"/>
</dbReference>
<dbReference type="KEGG" id="pai:PAE1771"/>
<dbReference type="PATRIC" id="fig|178306.9.peg.1304"/>
<dbReference type="eggNOG" id="arCOG04949">
    <property type="taxonomic scope" value="Archaea"/>
</dbReference>
<dbReference type="HOGENOM" id="CLU_008743_3_1_2"/>
<dbReference type="InParanoid" id="Q8ZWI8"/>
<dbReference type="BRENDA" id="7.1.3.1">
    <property type="organism ID" value="5239"/>
</dbReference>
<dbReference type="Proteomes" id="UP000002439">
    <property type="component" value="Chromosome"/>
</dbReference>
<dbReference type="GO" id="GO:0005886">
    <property type="term" value="C:plasma membrane"/>
    <property type="evidence" value="ECO:0007669"/>
    <property type="project" value="UniProtKB-SubCell"/>
</dbReference>
<dbReference type="GO" id="GO:0009678">
    <property type="term" value="F:diphosphate hydrolysis-driven proton transmembrane transporter activity"/>
    <property type="evidence" value="ECO:0007669"/>
    <property type="project" value="UniProtKB-UniRule"/>
</dbReference>
<dbReference type="GO" id="GO:0004427">
    <property type="term" value="F:inorganic diphosphate phosphatase activity"/>
    <property type="evidence" value="ECO:0007669"/>
    <property type="project" value="UniProtKB-UniRule"/>
</dbReference>
<dbReference type="GO" id="GO:0000287">
    <property type="term" value="F:magnesium ion binding"/>
    <property type="evidence" value="ECO:0007669"/>
    <property type="project" value="UniProtKB-UniRule"/>
</dbReference>
<dbReference type="HAMAP" id="MF_01129">
    <property type="entry name" value="PPase_energized_pump"/>
    <property type="match status" value="1"/>
</dbReference>
<dbReference type="InterPro" id="IPR004131">
    <property type="entry name" value="PPase-energised_H-pump"/>
</dbReference>
<dbReference type="NCBIfam" id="NF001953">
    <property type="entry name" value="PRK00733.2-1"/>
    <property type="match status" value="1"/>
</dbReference>
<dbReference type="NCBIfam" id="NF001960">
    <property type="entry name" value="PRK00733.3-5"/>
    <property type="match status" value="1"/>
</dbReference>
<dbReference type="NCBIfam" id="TIGR01104">
    <property type="entry name" value="V_PPase"/>
    <property type="match status" value="1"/>
</dbReference>
<dbReference type="PANTHER" id="PTHR31998">
    <property type="entry name" value="K(+)-INSENSITIVE PYROPHOSPHATE-ENERGIZED PROTON PUMP"/>
    <property type="match status" value="1"/>
</dbReference>
<dbReference type="Pfam" id="PF03030">
    <property type="entry name" value="H_PPase"/>
    <property type="match status" value="1"/>
</dbReference>
<dbReference type="PIRSF" id="PIRSF001265">
    <property type="entry name" value="H+-PPase"/>
    <property type="match status" value="1"/>
</dbReference>
<sequence length="721" mass="75394">MNMISYALLGVILGISGVIYAVYLAVWVLRQDPGNEKMRFISQAIATGARAYLFRQYRTLAVLLVILAVLILVAIDMPRRTFGLTALAFIVGALGSMLAGYLGMYVTTRSASRVAQAAATGGMGKALLVSWRAGAVMGLSLASIALLLISGFYLVFRSVLPDDWAVPLVALGFGASLVTLFMRVGGGIYTKAADLGADLVGKVEAGIPEDDPRNPGVIADNVGDNVGDVAGMAADVYESYIVTVTAAIFLAAILGLPTQFIEAIILFAALALVATFAGVNLLKTTGVKHPLSSISLAIYATIGLSVVLFFIGAFTLGLDSTKALALAATTSLGAVIAPLIVKITDYYTSYNYGPVRKIAEQAKISPATVIITGYGVGLMSAIPVIAVIVAVLGISYMIGYYTVPVSGFGELSKYLAGIFGTAMASVGLLVVAGIIITADSYGPVSDNAGGVVEMAGLPDEVREITDVLDSVGNTTKATTKGYAIASAALAALVLFIALIFEIVYSASKILGKGIVDMISESLSGLQLINANVLIGAFLGVALVYFFSSRTLEAVGRTAMEIVEEIRRQFREKPGILEWKEQPDYARVVDIATRRALGEFLIPGLAAIVLPLITGLLLGWNALAGLIMGAIVAGVPRALLMANAGGAWDNAKKYIEIQGLKKTEMHKAAVIGDTVGDPMKDTVGPSLNPLIKVLNTLSVVFTYVIVSTNIALGIWPSGLLPF</sequence>
<name>HPPA_PYRAE</name>
<evidence type="ECO:0000250" key="1"/>
<evidence type="ECO:0000255" key="2">
    <source>
        <dbReference type="HAMAP-Rule" id="MF_01129"/>
    </source>
</evidence>
<evidence type="ECO:0000269" key="3">
    <source>
    </source>
</evidence>
<evidence type="ECO:0000305" key="4"/>
<proteinExistence type="evidence at protein level"/>
<protein>
    <recommendedName>
        <fullName evidence="2">K(+)-insensitive pyrophosphate-energized proton pump</fullName>
        <ecNumber evidence="2 3">7.1.3.1</ecNumber>
    </recommendedName>
    <alternativeName>
        <fullName evidence="2">Membrane-bound proton-translocating pyrophosphatase</fullName>
    </alternativeName>
    <alternativeName>
        <fullName evidence="2">Pyrophosphate-energized inorganic pyrophosphatase</fullName>
        <shortName evidence="2">H(+)-PPase</shortName>
    </alternativeName>
</protein>
<organism>
    <name type="scientific">Pyrobaculum aerophilum (strain ATCC 51768 / DSM 7523 / JCM 9630 / CIP 104966 / NBRC 100827 / IM2)</name>
    <dbReference type="NCBI Taxonomy" id="178306"/>
    <lineage>
        <taxon>Archaea</taxon>
        <taxon>Thermoproteota</taxon>
        <taxon>Thermoprotei</taxon>
        <taxon>Thermoproteales</taxon>
        <taxon>Thermoproteaceae</taxon>
        <taxon>Pyrobaculum</taxon>
    </lineage>
</organism>